<reference key="1">
    <citation type="journal article" date="1995" name="J. Gen. Virol.">
        <title>Nucleotide sequence analysis of Jembrana disease virus: a bovine lentivirus associated with an acute disease syndrome.</title>
        <authorList>
            <person name="Chadwick B.J."/>
            <person name="Coelen R.J."/>
            <person name="Wilcox G.E."/>
            <person name="Sammels L.M."/>
            <person name="Kertayadnya G."/>
        </authorList>
    </citation>
    <scope>NUCLEOTIDE SEQUENCE [GENOMIC RNA]</scope>
    <source>
        <strain>Tabanan/87</strain>
    </source>
</reference>
<organism>
    <name type="scientific">Jembrana disease virus</name>
    <name type="common">JDV</name>
    <dbReference type="NCBI Taxonomy" id="36370"/>
    <lineage>
        <taxon>Viruses</taxon>
        <taxon>Riboviria</taxon>
        <taxon>Pararnavirae</taxon>
        <taxon>Artverviricota</taxon>
        <taxon>Revtraviricetes</taxon>
        <taxon>Ortervirales</taxon>
        <taxon>Retroviridae</taxon>
        <taxon>Orthoretrovirinae</taxon>
        <taxon>Lentivirus</taxon>
    </lineage>
</organism>
<name>VIF_JEMBR</name>
<evidence type="ECO:0000250" key="1"/>
<evidence type="ECO:0000256" key="2">
    <source>
        <dbReference type="SAM" id="MobiDB-lite"/>
    </source>
</evidence>
<evidence type="ECO:0000305" key="3"/>
<accession>Q82852</accession>
<feature type="chain" id="PRO_0000272345" description="Virion infectivity factor">
    <location>
        <begin position="1"/>
        <end position="197"/>
    </location>
</feature>
<feature type="region of interest" description="Disordered" evidence="2">
    <location>
        <begin position="1"/>
        <end position="22"/>
    </location>
</feature>
<feature type="compositionally biased region" description="Basic residues" evidence="2">
    <location>
        <begin position="10"/>
        <end position="22"/>
    </location>
</feature>
<comment type="function">
    <text evidence="1">Determines virus infectivity.</text>
</comment>
<comment type="subcellular location">
    <subcellularLocation>
        <location evidence="1">Host cytoplasm</location>
    </subcellularLocation>
    <subcellularLocation>
        <location evidence="1">Virion</location>
    </subcellularLocation>
</comment>
<comment type="similarity">
    <text evidence="3">Belongs to the lentiviruses Vif protein family.</text>
</comment>
<keyword id="KW-1035">Host cytoplasm</keyword>
<keyword id="KW-1185">Reference proteome</keyword>
<keyword id="KW-0946">Virion</keyword>
<proteinExistence type="inferred from homology"/>
<sequence>MERTIQSPMGRRRGSSGRRKRNANIISPPAYAIYPAPQYRYPRWEFVMNDLYSQTARLQKEEIIITYRYAVWAREWKIQTGFLDLGYLMTPAGTHTTGELNELDLFWVRYTLCQHRSPKWRELLLGEMTHTSCRRTAQAAVVSHTKPHTLQRLAGLTLVCNQNLCWYPVGTVTRNSPLWMHFTTGKEPTIQQLSGHP</sequence>
<dbReference type="EMBL" id="U21603">
    <property type="protein sequence ID" value="AAA64391.1"/>
    <property type="molecule type" value="Genomic_RNA"/>
</dbReference>
<dbReference type="RefSeq" id="NP_042685.1">
    <property type="nucleotide sequence ID" value="NC_001654.1"/>
</dbReference>
<dbReference type="GeneID" id="1497402"/>
<dbReference type="Proteomes" id="UP000246436">
    <property type="component" value="Genome"/>
</dbReference>
<dbReference type="GO" id="GO:0030430">
    <property type="term" value="C:host cell cytoplasm"/>
    <property type="evidence" value="ECO:0007669"/>
    <property type="project" value="UniProtKB-SubCell"/>
</dbReference>
<dbReference type="GO" id="GO:0044423">
    <property type="term" value="C:virion component"/>
    <property type="evidence" value="ECO:0007669"/>
    <property type="project" value="UniProtKB-KW"/>
</dbReference>
<dbReference type="InterPro" id="IPR009979">
    <property type="entry name" value="Lenti_VIF_2"/>
</dbReference>
<dbReference type="Pfam" id="PF07401">
    <property type="entry name" value="Lenti_VIF_2"/>
    <property type="match status" value="1"/>
</dbReference>
<dbReference type="PIRSF" id="PIRSF003854">
    <property type="entry name" value="Lenti_VIF_2"/>
    <property type="match status" value="1"/>
</dbReference>
<organismHost>
    <name type="scientific">Bos javanicus</name>
    <name type="common">Wild banteng</name>
    <dbReference type="NCBI Taxonomy" id="9906"/>
</organismHost>
<protein>
    <recommendedName>
        <fullName>Virion infectivity factor</fullName>
        <shortName>Vif</shortName>
    </recommendedName>
</protein>
<gene>
    <name type="primary">vif</name>
</gene>